<name>GRPE_ACIET</name>
<reference key="1">
    <citation type="submission" date="2009-01" db="EMBL/GenBank/DDBJ databases">
        <title>Complete sequence of Diaphorobacter sp. TPSY.</title>
        <authorList>
            <consortium name="US DOE Joint Genome Institute"/>
            <person name="Lucas S."/>
            <person name="Copeland A."/>
            <person name="Lapidus A."/>
            <person name="Glavina del Rio T."/>
            <person name="Tice H."/>
            <person name="Bruce D."/>
            <person name="Goodwin L."/>
            <person name="Pitluck S."/>
            <person name="Chertkov O."/>
            <person name="Brettin T."/>
            <person name="Detter J.C."/>
            <person name="Han C."/>
            <person name="Larimer F."/>
            <person name="Land M."/>
            <person name="Hauser L."/>
            <person name="Kyrpides N."/>
            <person name="Mikhailova N."/>
            <person name="Coates J.D."/>
        </authorList>
    </citation>
    <scope>NUCLEOTIDE SEQUENCE [LARGE SCALE GENOMIC DNA]</scope>
    <source>
        <strain>TPSY</strain>
    </source>
</reference>
<comment type="function">
    <text evidence="1">Participates actively in the response to hyperosmotic and heat shock by preventing the aggregation of stress-denatured proteins, in association with DnaK and GrpE. It is the nucleotide exchange factor for DnaK and may function as a thermosensor. Unfolded proteins bind initially to DnaJ; upon interaction with the DnaJ-bound protein, DnaK hydrolyzes its bound ATP, resulting in the formation of a stable complex. GrpE releases ADP from DnaK; ATP binding to DnaK triggers the release of the substrate protein, thus completing the reaction cycle. Several rounds of ATP-dependent interactions between DnaJ, DnaK and GrpE are required for fully efficient folding.</text>
</comment>
<comment type="subunit">
    <text evidence="1">Homodimer.</text>
</comment>
<comment type="subcellular location">
    <subcellularLocation>
        <location evidence="1">Cytoplasm</location>
    </subcellularLocation>
</comment>
<comment type="similarity">
    <text evidence="1">Belongs to the GrpE family.</text>
</comment>
<accession>B9MDJ6</accession>
<sequence>MSENQNPSPSPEEIEAAMSANAADELNRLQGELAELKAKSADLADQFLRAKAEAENARRRAEDEVAKARKFGIESFAESLLPVCDSLDAALAIENATAEQLREGSDATLRQLMSALERNKVVIVNPEAGTKFDPHQHQAISMVPADQEANTVVSVLQKGYLISDRVLRPALVTVAAPK</sequence>
<evidence type="ECO:0000255" key="1">
    <source>
        <dbReference type="HAMAP-Rule" id="MF_01151"/>
    </source>
</evidence>
<evidence type="ECO:0000256" key="2">
    <source>
        <dbReference type="SAM" id="MobiDB-lite"/>
    </source>
</evidence>
<dbReference type="EMBL" id="CP001392">
    <property type="protein sequence ID" value="ACM34005.1"/>
    <property type="molecule type" value="Genomic_DNA"/>
</dbReference>
<dbReference type="RefSeq" id="WP_015913928.1">
    <property type="nucleotide sequence ID" value="NC_011992.1"/>
</dbReference>
<dbReference type="SMR" id="B9MDJ6"/>
<dbReference type="KEGG" id="dia:Dtpsy_2570"/>
<dbReference type="eggNOG" id="COG0576">
    <property type="taxonomic scope" value="Bacteria"/>
</dbReference>
<dbReference type="HOGENOM" id="CLU_057217_6_1_4"/>
<dbReference type="Proteomes" id="UP000000450">
    <property type="component" value="Chromosome"/>
</dbReference>
<dbReference type="GO" id="GO:0005829">
    <property type="term" value="C:cytosol"/>
    <property type="evidence" value="ECO:0007669"/>
    <property type="project" value="TreeGrafter"/>
</dbReference>
<dbReference type="GO" id="GO:0000774">
    <property type="term" value="F:adenyl-nucleotide exchange factor activity"/>
    <property type="evidence" value="ECO:0007669"/>
    <property type="project" value="InterPro"/>
</dbReference>
<dbReference type="GO" id="GO:0042803">
    <property type="term" value="F:protein homodimerization activity"/>
    <property type="evidence" value="ECO:0007669"/>
    <property type="project" value="InterPro"/>
</dbReference>
<dbReference type="GO" id="GO:0051087">
    <property type="term" value="F:protein-folding chaperone binding"/>
    <property type="evidence" value="ECO:0007669"/>
    <property type="project" value="InterPro"/>
</dbReference>
<dbReference type="GO" id="GO:0051082">
    <property type="term" value="F:unfolded protein binding"/>
    <property type="evidence" value="ECO:0007669"/>
    <property type="project" value="TreeGrafter"/>
</dbReference>
<dbReference type="GO" id="GO:0006457">
    <property type="term" value="P:protein folding"/>
    <property type="evidence" value="ECO:0007669"/>
    <property type="project" value="InterPro"/>
</dbReference>
<dbReference type="CDD" id="cd00446">
    <property type="entry name" value="GrpE"/>
    <property type="match status" value="1"/>
</dbReference>
<dbReference type="FunFam" id="2.30.22.10:FF:000001">
    <property type="entry name" value="Protein GrpE"/>
    <property type="match status" value="1"/>
</dbReference>
<dbReference type="Gene3D" id="3.90.20.20">
    <property type="match status" value="1"/>
</dbReference>
<dbReference type="Gene3D" id="2.30.22.10">
    <property type="entry name" value="Head domain of nucleotide exchange factor GrpE"/>
    <property type="match status" value="1"/>
</dbReference>
<dbReference type="HAMAP" id="MF_01151">
    <property type="entry name" value="GrpE"/>
    <property type="match status" value="1"/>
</dbReference>
<dbReference type="InterPro" id="IPR000740">
    <property type="entry name" value="GrpE"/>
</dbReference>
<dbReference type="InterPro" id="IPR013805">
    <property type="entry name" value="GrpE_coiled_coil"/>
</dbReference>
<dbReference type="InterPro" id="IPR009012">
    <property type="entry name" value="GrpE_head"/>
</dbReference>
<dbReference type="NCBIfam" id="NF010737">
    <property type="entry name" value="PRK14139.1"/>
    <property type="match status" value="1"/>
</dbReference>
<dbReference type="NCBIfam" id="NF010738">
    <property type="entry name" value="PRK14140.1"/>
    <property type="match status" value="1"/>
</dbReference>
<dbReference type="NCBIfam" id="NF010748">
    <property type="entry name" value="PRK14150.1"/>
    <property type="match status" value="1"/>
</dbReference>
<dbReference type="PANTHER" id="PTHR21237">
    <property type="entry name" value="GRPE PROTEIN"/>
    <property type="match status" value="1"/>
</dbReference>
<dbReference type="PANTHER" id="PTHR21237:SF23">
    <property type="entry name" value="GRPE PROTEIN HOMOLOG, MITOCHONDRIAL"/>
    <property type="match status" value="1"/>
</dbReference>
<dbReference type="Pfam" id="PF01025">
    <property type="entry name" value="GrpE"/>
    <property type="match status" value="1"/>
</dbReference>
<dbReference type="PRINTS" id="PR00773">
    <property type="entry name" value="GRPEPROTEIN"/>
</dbReference>
<dbReference type="SUPFAM" id="SSF58014">
    <property type="entry name" value="Coiled-coil domain of nucleotide exchange factor GrpE"/>
    <property type="match status" value="1"/>
</dbReference>
<dbReference type="SUPFAM" id="SSF51064">
    <property type="entry name" value="Head domain of nucleotide exchange factor GrpE"/>
    <property type="match status" value="1"/>
</dbReference>
<dbReference type="PROSITE" id="PS01071">
    <property type="entry name" value="GRPE"/>
    <property type="match status" value="1"/>
</dbReference>
<feature type="chain" id="PRO_1000164188" description="Protein GrpE">
    <location>
        <begin position="1"/>
        <end position="178"/>
    </location>
</feature>
<feature type="region of interest" description="Disordered" evidence="2">
    <location>
        <begin position="1"/>
        <end position="22"/>
    </location>
</feature>
<keyword id="KW-0143">Chaperone</keyword>
<keyword id="KW-0963">Cytoplasm</keyword>
<keyword id="KW-1185">Reference proteome</keyword>
<keyword id="KW-0346">Stress response</keyword>
<organism>
    <name type="scientific">Acidovorax ebreus (strain TPSY)</name>
    <name type="common">Diaphorobacter sp. (strain TPSY)</name>
    <dbReference type="NCBI Taxonomy" id="535289"/>
    <lineage>
        <taxon>Bacteria</taxon>
        <taxon>Pseudomonadati</taxon>
        <taxon>Pseudomonadota</taxon>
        <taxon>Betaproteobacteria</taxon>
        <taxon>Burkholderiales</taxon>
        <taxon>Comamonadaceae</taxon>
        <taxon>Diaphorobacter</taxon>
    </lineage>
</organism>
<gene>
    <name evidence="1" type="primary">grpE</name>
    <name type="ordered locus">Dtpsy_2570</name>
</gene>
<proteinExistence type="inferred from homology"/>
<protein>
    <recommendedName>
        <fullName evidence="1">Protein GrpE</fullName>
    </recommendedName>
    <alternativeName>
        <fullName evidence="1">HSP-70 cofactor</fullName>
    </alternativeName>
</protein>